<keyword id="KW-0413">Isomerase</keyword>
<proteinExistence type="inferred from homology"/>
<accession>B0VQK6</accession>
<organism>
    <name type="scientific">Acinetobacter baumannii (strain SDF)</name>
    <dbReference type="NCBI Taxonomy" id="509170"/>
    <lineage>
        <taxon>Bacteria</taxon>
        <taxon>Pseudomonadati</taxon>
        <taxon>Pseudomonadota</taxon>
        <taxon>Gammaproteobacteria</taxon>
        <taxon>Moraxellales</taxon>
        <taxon>Moraxellaceae</taxon>
        <taxon>Acinetobacter</taxon>
        <taxon>Acinetobacter calcoaceticus/baumannii complex</taxon>
    </lineage>
</organism>
<dbReference type="EC" id="5.3.1.6" evidence="1"/>
<dbReference type="EMBL" id="CU468230">
    <property type="protein sequence ID" value="CAP01385.1"/>
    <property type="molecule type" value="Genomic_DNA"/>
</dbReference>
<dbReference type="SMR" id="B0VQK6"/>
<dbReference type="KEGG" id="abm:ABSDF2055"/>
<dbReference type="HOGENOM" id="CLU_056590_1_1_6"/>
<dbReference type="UniPathway" id="UPA00115">
    <property type="reaction ID" value="UER00412"/>
</dbReference>
<dbReference type="Proteomes" id="UP000001741">
    <property type="component" value="Chromosome"/>
</dbReference>
<dbReference type="GO" id="GO:0005829">
    <property type="term" value="C:cytosol"/>
    <property type="evidence" value="ECO:0007669"/>
    <property type="project" value="TreeGrafter"/>
</dbReference>
<dbReference type="GO" id="GO:0004751">
    <property type="term" value="F:ribose-5-phosphate isomerase activity"/>
    <property type="evidence" value="ECO:0007669"/>
    <property type="project" value="UniProtKB-UniRule"/>
</dbReference>
<dbReference type="GO" id="GO:0006014">
    <property type="term" value="P:D-ribose metabolic process"/>
    <property type="evidence" value="ECO:0007669"/>
    <property type="project" value="TreeGrafter"/>
</dbReference>
<dbReference type="GO" id="GO:0009052">
    <property type="term" value="P:pentose-phosphate shunt, non-oxidative branch"/>
    <property type="evidence" value="ECO:0007669"/>
    <property type="project" value="UniProtKB-UniRule"/>
</dbReference>
<dbReference type="CDD" id="cd01398">
    <property type="entry name" value="RPI_A"/>
    <property type="match status" value="1"/>
</dbReference>
<dbReference type="FunFam" id="3.30.70.260:FF:000004">
    <property type="entry name" value="Ribose-5-phosphate isomerase A"/>
    <property type="match status" value="1"/>
</dbReference>
<dbReference type="FunFam" id="3.40.50.1360:FF:000001">
    <property type="entry name" value="Ribose-5-phosphate isomerase A"/>
    <property type="match status" value="1"/>
</dbReference>
<dbReference type="Gene3D" id="3.30.70.260">
    <property type="match status" value="1"/>
</dbReference>
<dbReference type="Gene3D" id="3.40.50.1360">
    <property type="match status" value="1"/>
</dbReference>
<dbReference type="HAMAP" id="MF_00170">
    <property type="entry name" value="Rib_5P_isom_A"/>
    <property type="match status" value="1"/>
</dbReference>
<dbReference type="InterPro" id="IPR037171">
    <property type="entry name" value="NagB/RpiA_transferase-like"/>
</dbReference>
<dbReference type="InterPro" id="IPR020672">
    <property type="entry name" value="Ribose5P_isomerase_typA_subgr"/>
</dbReference>
<dbReference type="InterPro" id="IPR004788">
    <property type="entry name" value="Ribose5P_isomerase_type_A"/>
</dbReference>
<dbReference type="NCBIfam" id="NF001924">
    <property type="entry name" value="PRK00702.1"/>
    <property type="match status" value="1"/>
</dbReference>
<dbReference type="NCBIfam" id="TIGR00021">
    <property type="entry name" value="rpiA"/>
    <property type="match status" value="1"/>
</dbReference>
<dbReference type="PANTHER" id="PTHR11934">
    <property type="entry name" value="RIBOSE-5-PHOSPHATE ISOMERASE"/>
    <property type="match status" value="1"/>
</dbReference>
<dbReference type="PANTHER" id="PTHR11934:SF0">
    <property type="entry name" value="RIBOSE-5-PHOSPHATE ISOMERASE"/>
    <property type="match status" value="1"/>
</dbReference>
<dbReference type="Pfam" id="PF06026">
    <property type="entry name" value="Rib_5-P_isom_A"/>
    <property type="match status" value="1"/>
</dbReference>
<dbReference type="SUPFAM" id="SSF75445">
    <property type="entry name" value="D-ribose-5-phosphate isomerase (RpiA), lid domain"/>
    <property type="match status" value="1"/>
</dbReference>
<dbReference type="SUPFAM" id="SSF100950">
    <property type="entry name" value="NagB/RpiA/CoA transferase-like"/>
    <property type="match status" value="1"/>
</dbReference>
<feature type="chain" id="PRO_1000097640" description="Ribose-5-phosphate isomerase A">
    <location>
        <begin position="1"/>
        <end position="223"/>
    </location>
</feature>
<feature type="active site" description="Proton acceptor" evidence="1">
    <location>
        <position position="105"/>
    </location>
</feature>
<feature type="binding site" evidence="1">
    <location>
        <begin position="32"/>
        <end position="35"/>
    </location>
    <ligand>
        <name>substrate</name>
    </ligand>
</feature>
<feature type="binding site" evidence="1">
    <location>
        <begin position="83"/>
        <end position="86"/>
    </location>
    <ligand>
        <name>substrate</name>
    </ligand>
</feature>
<feature type="binding site" evidence="1">
    <location>
        <begin position="96"/>
        <end position="99"/>
    </location>
    <ligand>
        <name>substrate</name>
    </ligand>
</feature>
<feature type="binding site" evidence="1">
    <location>
        <position position="123"/>
    </location>
    <ligand>
        <name>substrate</name>
    </ligand>
</feature>
<protein>
    <recommendedName>
        <fullName evidence="1">Ribose-5-phosphate isomerase A</fullName>
        <ecNumber evidence="1">5.3.1.6</ecNumber>
    </recommendedName>
    <alternativeName>
        <fullName evidence="1">Phosphoriboisomerase A</fullName>
        <shortName evidence="1">PRI</shortName>
    </alternativeName>
</protein>
<reference key="1">
    <citation type="journal article" date="2008" name="PLoS ONE">
        <title>Comparative analysis of Acinetobacters: three genomes for three lifestyles.</title>
        <authorList>
            <person name="Vallenet D."/>
            <person name="Nordmann P."/>
            <person name="Barbe V."/>
            <person name="Poirel L."/>
            <person name="Mangenot S."/>
            <person name="Bataille E."/>
            <person name="Dossat C."/>
            <person name="Gas S."/>
            <person name="Kreimeyer A."/>
            <person name="Lenoble P."/>
            <person name="Oztas S."/>
            <person name="Poulain J."/>
            <person name="Segurens B."/>
            <person name="Robert C."/>
            <person name="Abergel C."/>
            <person name="Claverie J.-M."/>
            <person name="Raoult D."/>
            <person name="Medigue C."/>
            <person name="Weissenbach J."/>
            <person name="Cruveiller S."/>
        </authorList>
    </citation>
    <scope>NUCLEOTIDE SEQUENCE [LARGE SCALE GENOMIC DNA]</scope>
    <source>
        <strain>SDF</strain>
    </source>
</reference>
<name>RPIA_ACIBS</name>
<sequence length="223" mass="23749">MSLYATQDEKKQAAAKAALKHLPKGGILGVGTGSTVNFLIDLLPELQLEAAVASSQATADRLKKLGIEVVDMNHVVSLDAYVDGADEIDRHMHMIKGGGAALTREKIVASIAKKFVCIVDDSKWVDQLGRDFPLPVEVIPMARSAVARKLVSLGGDPVYREGVVTDNGNVILDVFNLNILNAIDLEKTINNIPGVVTNGIFALNPATIAIVATNDGIEERTAQ</sequence>
<evidence type="ECO:0000255" key="1">
    <source>
        <dbReference type="HAMAP-Rule" id="MF_00170"/>
    </source>
</evidence>
<comment type="function">
    <text evidence="1">Catalyzes the reversible conversion of ribose-5-phosphate to ribulose 5-phosphate.</text>
</comment>
<comment type="catalytic activity">
    <reaction evidence="1">
        <text>aldehydo-D-ribose 5-phosphate = D-ribulose 5-phosphate</text>
        <dbReference type="Rhea" id="RHEA:14657"/>
        <dbReference type="ChEBI" id="CHEBI:58121"/>
        <dbReference type="ChEBI" id="CHEBI:58273"/>
        <dbReference type="EC" id="5.3.1.6"/>
    </reaction>
</comment>
<comment type="pathway">
    <text evidence="1">Carbohydrate degradation; pentose phosphate pathway; D-ribose 5-phosphate from D-ribulose 5-phosphate (non-oxidative stage): step 1/1.</text>
</comment>
<comment type="subunit">
    <text evidence="1">Homodimer.</text>
</comment>
<comment type="similarity">
    <text evidence="1">Belongs to the ribose 5-phosphate isomerase family.</text>
</comment>
<gene>
    <name evidence="1" type="primary">rpiA</name>
    <name type="ordered locus">ABSDF2055</name>
</gene>